<name>RPPH_XANAC</name>
<feature type="chain" id="PRO_0000057035" description="RNA pyrophosphohydrolase">
    <location>
        <begin position="1"/>
        <end position="205"/>
    </location>
</feature>
<feature type="domain" description="Nudix hydrolase" evidence="1">
    <location>
        <begin position="6"/>
        <end position="149"/>
    </location>
</feature>
<feature type="region of interest" description="Disordered" evidence="2">
    <location>
        <begin position="178"/>
        <end position="205"/>
    </location>
</feature>
<feature type="short sequence motif" description="Nudix box">
    <location>
        <begin position="38"/>
        <end position="59"/>
    </location>
</feature>
<feature type="compositionally biased region" description="Basic residues" evidence="2">
    <location>
        <begin position="187"/>
        <end position="196"/>
    </location>
</feature>
<organism>
    <name type="scientific">Xanthomonas axonopodis pv. citri (strain 306)</name>
    <dbReference type="NCBI Taxonomy" id="190486"/>
    <lineage>
        <taxon>Bacteria</taxon>
        <taxon>Pseudomonadati</taxon>
        <taxon>Pseudomonadota</taxon>
        <taxon>Gammaproteobacteria</taxon>
        <taxon>Lysobacterales</taxon>
        <taxon>Lysobacteraceae</taxon>
        <taxon>Xanthomonas</taxon>
    </lineage>
</organism>
<comment type="function">
    <text evidence="1">Accelerates the degradation of transcripts by removing pyrophosphate from the 5'-end of triphosphorylated RNA, leading to a more labile monophosphorylated state that can stimulate subsequent ribonuclease cleavage.</text>
</comment>
<comment type="cofactor">
    <cofactor evidence="1">
        <name>a divalent metal cation</name>
        <dbReference type="ChEBI" id="CHEBI:60240"/>
    </cofactor>
</comment>
<comment type="similarity">
    <text evidence="1">Belongs to the Nudix hydrolase family. RppH subfamily.</text>
</comment>
<accession>Q8PQ40</accession>
<reference key="1">
    <citation type="journal article" date="2002" name="Nature">
        <title>Comparison of the genomes of two Xanthomonas pathogens with differing host specificities.</title>
        <authorList>
            <person name="da Silva A.C.R."/>
            <person name="Ferro J.A."/>
            <person name="Reinach F.C."/>
            <person name="Farah C.S."/>
            <person name="Furlan L.R."/>
            <person name="Quaggio R.B."/>
            <person name="Monteiro-Vitorello C.B."/>
            <person name="Van Sluys M.A."/>
            <person name="Almeida N.F. Jr."/>
            <person name="Alves L.M.C."/>
            <person name="do Amaral A.M."/>
            <person name="Bertolini M.C."/>
            <person name="Camargo L.E.A."/>
            <person name="Camarotte G."/>
            <person name="Cannavan F."/>
            <person name="Cardozo J."/>
            <person name="Chambergo F."/>
            <person name="Ciapina L.P."/>
            <person name="Cicarelli R.M.B."/>
            <person name="Coutinho L.L."/>
            <person name="Cursino-Santos J.R."/>
            <person name="El-Dorry H."/>
            <person name="Faria J.B."/>
            <person name="Ferreira A.J.S."/>
            <person name="Ferreira R.C.C."/>
            <person name="Ferro M.I.T."/>
            <person name="Formighieri E.F."/>
            <person name="Franco M.C."/>
            <person name="Greggio C.C."/>
            <person name="Gruber A."/>
            <person name="Katsuyama A.M."/>
            <person name="Kishi L.T."/>
            <person name="Leite R.P."/>
            <person name="Lemos E.G.M."/>
            <person name="Lemos M.V.F."/>
            <person name="Locali E.C."/>
            <person name="Machado M.A."/>
            <person name="Madeira A.M.B.N."/>
            <person name="Martinez-Rossi N.M."/>
            <person name="Martins E.C."/>
            <person name="Meidanis J."/>
            <person name="Menck C.F.M."/>
            <person name="Miyaki C.Y."/>
            <person name="Moon D.H."/>
            <person name="Moreira L.M."/>
            <person name="Novo M.T.M."/>
            <person name="Okura V.K."/>
            <person name="Oliveira M.C."/>
            <person name="Oliveira V.R."/>
            <person name="Pereira H.A."/>
            <person name="Rossi A."/>
            <person name="Sena J.A.D."/>
            <person name="Silva C."/>
            <person name="de Souza R.F."/>
            <person name="Spinola L.A.F."/>
            <person name="Takita M.A."/>
            <person name="Tamura R.E."/>
            <person name="Teixeira E.C."/>
            <person name="Tezza R.I.D."/>
            <person name="Trindade dos Santos M."/>
            <person name="Truffi D."/>
            <person name="Tsai S.M."/>
            <person name="White F.F."/>
            <person name="Setubal J.C."/>
            <person name="Kitajima J.P."/>
        </authorList>
    </citation>
    <scope>NUCLEOTIDE SEQUENCE [LARGE SCALE GENOMIC DNA]</scope>
    <source>
        <strain>306</strain>
    </source>
</reference>
<proteinExistence type="inferred from homology"/>
<gene>
    <name evidence="1" type="primary">rppH</name>
    <name evidence="1" type="synonym">nudH</name>
    <name type="ordered locus">XAC0491</name>
</gene>
<dbReference type="EC" id="3.6.1.-" evidence="1"/>
<dbReference type="EMBL" id="AE008923">
    <property type="protein sequence ID" value="AAM35380.1"/>
    <property type="molecule type" value="Genomic_DNA"/>
</dbReference>
<dbReference type="RefSeq" id="WP_005914195.1">
    <property type="nucleotide sequence ID" value="NC_003919.1"/>
</dbReference>
<dbReference type="SMR" id="Q8PQ40"/>
<dbReference type="KEGG" id="xac:XAC0491"/>
<dbReference type="eggNOG" id="COG1051">
    <property type="taxonomic scope" value="Bacteria"/>
</dbReference>
<dbReference type="HOGENOM" id="CLU_087195_3_1_6"/>
<dbReference type="Proteomes" id="UP000000576">
    <property type="component" value="Chromosome"/>
</dbReference>
<dbReference type="GO" id="GO:0016462">
    <property type="term" value="F:pyrophosphatase activity"/>
    <property type="evidence" value="ECO:0007669"/>
    <property type="project" value="UniProtKB-ARBA"/>
</dbReference>
<dbReference type="CDD" id="cd03671">
    <property type="entry name" value="NUDIX_Ap4A_hydrolase_plant_like"/>
    <property type="match status" value="1"/>
</dbReference>
<dbReference type="FunFam" id="3.90.79.10:FF:000001">
    <property type="entry name" value="RNA pyrophosphohydrolase"/>
    <property type="match status" value="1"/>
</dbReference>
<dbReference type="Gene3D" id="3.90.79.10">
    <property type="entry name" value="Nucleoside Triphosphate Pyrophosphohydrolase"/>
    <property type="match status" value="1"/>
</dbReference>
<dbReference type="HAMAP" id="MF_00298">
    <property type="entry name" value="Nudix_RppH"/>
    <property type="match status" value="1"/>
</dbReference>
<dbReference type="InterPro" id="IPR015797">
    <property type="entry name" value="NUDIX_hydrolase-like_dom_sf"/>
</dbReference>
<dbReference type="InterPro" id="IPR020084">
    <property type="entry name" value="NUDIX_hydrolase_CS"/>
</dbReference>
<dbReference type="InterPro" id="IPR000086">
    <property type="entry name" value="NUDIX_hydrolase_dom"/>
</dbReference>
<dbReference type="InterPro" id="IPR022927">
    <property type="entry name" value="RppH"/>
</dbReference>
<dbReference type="NCBIfam" id="NF001937">
    <property type="entry name" value="PRK00714.1-4"/>
    <property type="match status" value="1"/>
</dbReference>
<dbReference type="NCBIfam" id="NF001938">
    <property type="entry name" value="PRK00714.1-5"/>
    <property type="match status" value="1"/>
</dbReference>
<dbReference type="PANTHER" id="PTHR43736">
    <property type="entry name" value="ADP-RIBOSE PYROPHOSPHATASE"/>
    <property type="match status" value="1"/>
</dbReference>
<dbReference type="PANTHER" id="PTHR43736:SF1">
    <property type="entry name" value="DIHYDRONEOPTERIN TRIPHOSPHATE DIPHOSPHATASE"/>
    <property type="match status" value="1"/>
</dbReference>
<dbReference type="Pfam" id="PF00293">
    <property type="entry name" value="NUDIX"/>
    <property type="match status" value="1"/>
</dbReference>
<dbReference type="SUPFAM" id="SSF55811">
    <property type="entry name" value="Nudix"/>
    <property type="match status" value="1"/>
</dbReference>
<dbReference type="PROSITE" id="PS51462">
    <property type="entry name" value="NUDIX"/>
    <property type="match status" value="1"/>
</dbReference>
<dbReference type="PROSITE" id="PS00893">
    <property type="entry name" value="NUDIX_BOX"/>
    <property type="match status" value="1"/>
</dbReference>
<sequence length="205" mass="23675">MIDPDGFRPNVGIVLMRQDGQVFWARRVRRDGWQFPQGGMNTDETPVEAMYRELREETGLLPEHVELLGATPGWLRYRLPSRAVRRNERQVCIGQKQVWFLLQFTGDESHLKLDHTDTPEFDHWRWVDFWYPVEHVVMFKRGVYARALRHLAPLAQSLAGPAAVGAMPERALEAWLPGSSAAGHDSPRKRPRKRNGARAMRINND</sequence>
<keyword id="KW-0378">Hydrolase</keyword>
<evidence type="ECO:0000255" key="1">
    <source>
        <dbReference type="HAMAP-Rule" id="MF_00298"/>
    </source>
</evidence>
<evidence type="ECO:0000256" key="2">
    <source>
        <dbReference type="SAM" id="MobiDB-lite"/>
    </source>
</evidence>
<protein>
    <recommendedName>
        <fullName evidence="1">RNA pyrophosphohydrolase</fullName>
        <ecNumber evidence="1">3.6.1.-</ecNumber>
    </recommendedName>
    <alternativeName>
        <fullName evidence="1">(Di)nucleoside polyphosphate hydrolase</fullName>
    </alternativeName>
</protein>